<feature type="chain" id="PRO_0000449304" description="Ent-kaurene synthase, chloroplastic">
    <location>
        <begin position="1" status="less than"/>
        <end position="756"/>
    </location>
</feature>
<feature type="transmembrane region" description="Helical" evidence="3">
    <location>
        <begin position="606"/>
        <end position="622"/>
    </location>
</feature>
<feature type="short sequence motif" description="DDXXD motif" evidence="1">
    <location>
        <begin position="507"/>
        <end position="511"/>
    </location>
</feature>
<feature type="binding site" evidence="2">
    <location>
        <position position="507"/>
    </location>
    <ligand>
        <name>Mg(2+)</name>
        <dbReference type="ChEBI" id="CHEBI:18420"/>
        <label>1</label>
    </ligand>
</feature>
<feature type="binding site" evidence="2">
    <location>
        <position position="507"/>
    </location>
    <ligand>
        <name>Mg(2+)</name>
        <dbReference type="ChEBI" id="CHEBI:18420"/>
        <label>2</label>
    </ligand>
</feature>
<feature type="binding site" evidence="2">
    <location>
        <position position="511"/>
    </location>
    <ligand>
        <name>Mg(2+)</name>
        <dbReference type="ChEBI" id="CHEBI:18420"/>
        <label>1</label>
    </ligand>
</feature>
<feature type="binding site" evidence="2">
    <location>
        <position position="511"/>
    </location>
    <ligand>
        <name>Mg(2+)</name>
        <dbReference type="ChEBI" id="CHEBI:18420"/>
        <label>2</label>
    </ligand>
</feature>
<feature type="binding site" evidence="2">
    <location>
        <position position="651"/>
    </location>
    <ligand>
        <name>Mg(2+)</name>
        <dbReference type="ChEBI" id="CHEBI:18420"/>
        <label>3</label>
    </ligand>
</feature>
<feature type="binding site" evidence="2">
    <location>
        <position position="655"/>
    </location>
    <ligand>
        <name>Mg(2+)</name>
        <dbReference type="ChEBI" id="CHEBI:18420"/>
        <label>3</label>
    </ligand>
</feature>
<feature type="binding site" evidence="2">
    <location>
        <position position="659"/>
    </location>
    <ligand>
        <name>Mg(2+)</name>
        <dbReference type="ChEBI" id="CHEBI:18420"/>
        <label>3</label>
    </ligand>
</feature>
<feature type="non-terminal residue">
    <location>
        <position position="1"/>
    </location>
</feature>
<accession>A0A075FBT3</accession>
<name>EKS_MARVU</name>
<gene>
    <name evidence="5" type="primary">EKS</name>
</gene>
<protein>
    <recommendedName>
        <fullName evidence="5">Ent-kaurene synthase, chloroplastic</fullName>
        <ecNumber evidence="4">4.2.3.19</ecNumber>
    </recommendedName>
</protein>
<proteinExistence type="evidence at protein level"/>
<keyword id="KW-0150">Chloroplast</keyword>
<keyword id="KW-0456">Lyase</keyword>
<keyword id="KW-0460">Magnesium</keyword>
<keyword id="KW-0472">Membrane</keyword>
<keyword id="KW-0479">Metal-binding</keyword>
<keyword id="KW-0934">Plastid</keyword>
<keyword id="KW-0812">Transmembrane</keyword>
<keyword id="KW-1133">Transmembrane helix</keyword>
<comment type="function">
    <text evidence="4 7">Involved in the biosynthesis of labdane-type diterpenoid including marrubiin and other labdane-related furanoid diterpenoids with potential applications as anti-diabetics, analgesics or vasorelaxants (Probable). Terpene synthase that produces ent-kaurene from ent-copalyl diphosphate (ent-CPP) (PubMed:24990389).</text>
</comment>
<comment type="catalytic activity">
    <reaction evidence="4">
        <text>ent-copalyl diphosphate = ent-kaur-16-ene + diphosphate</text>
        <dbReference type="Rhea" id="RHEA:22220"/>
        <dbReference type="ChEBI" id="CHEBI:15415"/>
        <dbReference type="ChEBI" id="CHEBI:33019"/>
        <dbReference type="ChEBI" id="CHEBI:58553"/>
        <dbReference type="EC" id="4.2.3.19"/>
    </reaction>
    <physiologicalReaction direction="left-to-right" evidence="4">
        <dbReference type="Rhea" id="RHEA:22221"/>
    </physiologicalReaction>
</comment>
<comment type="cofactor">
    <cofactor evidence="2">
        <name>Mg(2+)</name>
        <dbReference type="ChEBI" id="CHEBI:18420"/>
    </cofactor>
    <text evidence="2">Binds 3 Mg(2+) ions per subunit.</text>
</comment>
<comment type="pathway">
    <text evidence="7">Plant hormone biosynthesis; gibberellin biosynthesis.</text>
</comment>
<comment type="subcellular location">
    <subcellularLocation>
        <location evidence="6">Plastid</location>
        <location evidence="6">Chloroplast membrane</location>
        <topology evidence="3">Single-pass membrane protein</topology>
    </subcellularLocation>
</comment>
<comment type="tissue specificity">
    <text evidence="4">Present in both leaves and flowers.</text>
</comment>
<comment type="domain">
    <text evidence="1">The Asp-Asp-Xaa-Xaa-Asp/Glu (DDXXD/E) motif is important for the catalytic activity, presumably through binding to Mg(2+).</text>
</comment>
<comment type="similarity">
    <text evidence="6">Belongs to the terpene synthase family.</text>
</comment>
<dbReference type="EC" id="4.2.3.19" evidence="4"/>
<dbReference type="EMBL" id="KJ584453">
    <property type="protein sequence ID" value="AIE77093.1"/>
    <property type="molecule type" value="mRNA"/>
</dbReference>
<dbReference type="SMR" id="A0A075FBT3"/>
<dbReference type="UniPathway" id="UPA00390"/>
<dbReference type="GO" id="GO:0031969">
    <property type="term" value="C:chloroplast membrane"/>
    <property type="evidence" value="ECO:0007669"/>
    <property type="project" value="UniProtKB-SubCell"/>
</dbReference>
<dbReference type="GO" id="GO:0009899">
    <property type="term" value="F:ent-kaurene synthase activity"/>
    <property type="evidence" value="ECO:0000314"/>
    <property type="project" value="UniProtKB"/>
</dbReference>
<dbReference type="GO" id="GO:0000287">
    <property type="term" value="F:magnesium ion binding"/>
    <property type="evidence" value="ECO:0007669"/>
    <property type="project" value="InterPro"/>
</dbReference>
<dbReference type="GO" id="GO:0009686">
    <property type="term" value="P:gibberellin biosynthetic process"/>
    <property type="evidence" value="ECO:0007669"/>
    <property type="project" value="UniProtKB-UniPathway"/>
</dbReference>
<dbReference type="CDD" id="cd00684">
    <property type="entry name" value="Terpene_cyclase_plant_C1"/>
    <property type="match status" value="1"/>
</dbReference>
<dbReference type="FunFam" id="1.50.10.160:FF:000002">
    <property type="entry name" value="cis-abienol synthase, chloroplastic"/>
    <property type="match status" value="1"/>
</dbReference>
<dbReference type="FunFam" id="1.50.10.130:FF:000002">
    <property type="entry name" value="Ent-copalyl diphosphate synthase, chloroplastic"/>
    <property type="match status" value="1"/>
</dbReference>
<dbReference type="FunFam" id="1.10.600.10:FF:000005">
    <property type="entry name" value="Ent-kaur-16-ene synthase, chloroplastic"/>
    <property type="match status" value="1"/>
</dbReference>
<dbReference type="Gene3D" id="1.50.10.160">
    <property type="match status" value="1"/>
</dbReference>
<dbReference type="Gene3D" id="1.10.600.10">
    <property type="entry name" value="Farnesyl Diphosphate Synthase"/>
    <property type="match status" value="1"/>
</dbReference>
<dbReference type="Gene3D" id="1.50.10.130">
    <property type="entry name" value="Terpene synthase, N-terminal domain"/>
    <property type="match status" value="1"/>
</dbReference>
<dbReference type="InterPro" id="IPR008949">
    <property type="entry name" value="Isoprenoid_synthase_dom_sf"/>
</dbReference>
<dbReference type="InterPro" id="IPR044814">
    <property type="entry name" value="Terpene_cyclase_plant_C1"/>
</dbReference>
<dbReference type="InterPro" id="IPR001906">
    <property type="entry name" value="Terpene_synth_N"/>
</dbReference>
<dbReference type="InterPro" id="IPR036965">
    <property type="entry name" value="Terpene_synth_N_sf"/>
</dbReference>
<dbReference type="InterPro" id="IPR050148">
    <property type="entry name" value="Terpene_synthase-like"/>
</dbReference>
<dbReference type="InterPro" id="IPR005630">
    <property type="entry name" value="Terpene_synthase_metal-bd"/>
</dbReference>
<dbReference type="InterPro" id="IPR008930">
    <property type="entry name" value="Terpenoid_cyclase/PrenylTrfase"/>
</dbReference>
<dbReference type="PANTHER" id="PTHR31739">
    <property type="entry name" value="ENT-COPALYL DIPHOSPHATE SYNTHASE, CHLOROPLASTIC"/>
    <property type="match status" value="1"/>
</dbReference>
<dbReference type="PANTHER" id="PTHR31739:SF3">
    <property type="entry name" value="ENT-KAUR-16-ENE SYNTHASE, CHLOROPLASTIC"/>
    <property type="match status" value="1"/>
</dbReference>
<dbReference type="Pfam" id="PF01397">
    <property type="entry name" value="Terpene_synth"/>
    <property type="match status" value="1"/>
</dbReference>
<dbReference type="Pfam" id="PF03936">
    <property type="entry name" value="Terpene_synth_C"/>
    <property type="match status" value="1"/>
</dbReference>
<dbReference type="SFLD" id="SFLDG01014">
    <property type="entry name" value="Terpene_Cyclase_Like_1_N-term"/>
    <property type="match status" value="1"/>
</dbReference>
<dbReference type="SUPFAM" id="SSF48239">
    <property type="entry name" value="Terpenoid cyclases/Protein prenyltransferases"/>
    <property type="match status" value="2"/>
</dbReference>
<dbReference type="SUPFAM" id="SSF48576">
    <property type="entry name" value="Terpenoid synthases"/>
    <property type="match status" value="1"/>
</dbReference>
<sequence length="756" mass="86373">IDESQTSLDTGVQRFTSSKIASSVQCFEDTKARIVKLIHKPELSVSTYDTAWVAMVPSPNSSNEPCFPDCLAWLLENQCCDGSWACPHHHPFLKKDVLSSTLACILALKKWGVGEEQINKGARFIEVNFASATEKSQISPTGFDIIFPAMLDYARDLFLDLRLEPTTFDNLIFRRDLELKRCYESHREAYLAYIAEGMGKLQDWESVMKYQRKNGSLFNSPSTTAAAFIALPNSGCLSYLHSALKKFGNAVPAAYPLDVYSRLRTVDNLESLGISRYFQKEIQQVLDETYRWWLQGSEEIFLDASTCALAFRTLRMNGYNVTSDAITKLLPDSFCGNMKDIGTTLELYRASEFILYPDEKDLEQQNLRLKDILEQELSSGFIHSEVNRALNYPFYAIMDRVAKRRNIEHYNFDNTRILKTSYCSPNFANKDFLFLSVEDFNNCQAMHREELKGKMRWVTENRLDELKFARSKSAYCYFSAAATFFAPDLSDARMSWAKNGVLTTVVDDFFDVGGSEEELKQLIRLVEIWDLDAITECSSQNVQIIFSSLKRTISEIGDKGFKLQGRSVTNHIIEIWLDLLYSMMKEAEWARDNHAPPMDDYISNAYVSFALGPIVLPCLYLVGPKLSEEMVRHSECHTLFRLMSTCGRLLNDIQTCERELKDGKLNAIPLYMINSGGETSKEAATQEMKSLIDRQRQELLRLVLTREGSLLPKPCKELFWHMSTVLHLFYCKDDGFTSQDLIKVVNEVIHEPVVLN</sequence>
<organism>
    <name type="scientific">Marrubium vulgare</name>
    <name type="common">White horehound</name>
    <dbReference type="NCBI Taxonomy" id="41230"/>
    <lineage>
        <taxon>Eukaryota</taxon>
        <taxon>Viridiplantae</taxon>
        <taxon>Streptophyta</taxon>
        <taxon>Embryophyta</taxon>
        <taxon>Tracheophyta</taxon>
        <taxon>Spermatophyta</taxon>
        <taxon>Magnoliopsida</taxon>
        <taxon>eudicotyledons</taxon>
        <taxon>Gunneridae</taxon>
        <taxon>Pentapetalae</taxon>
        <taxon>asterids</taxon>
        <taxon>lamiids</taxon>
        <taxon>Lamiales</taxon>
        <taxon>Lamiaceae</taxon>
        <taxon>Lamioideae</taxon>
        <taxon>Marrubieae</taxon>
        <taxon>Marrubium</taxon>
    </lineage>
</organism>
<evidence type="ECO:0000250" key="1">
    <source>
        <dbReference type="UniProtKB" id="G8GJ94"/>
    </source>
</evidence>
<evidence type="ECO:0000250" key="2">
    <source>
        <dbReference type="UniProtKB" id="Q40577"/>
    </source>
</evidence>
<evidence type="ECO:0000255" key="3"/>
<evidence type="ECO:0000269" key="4">
    <source>
    </source>
</evidence>
<evidence type="ECO:0000303" key="5">
    <source>
    </source>
</evidence>
<evidence type="ECO:0000305" key="6"/>
<evidence type="ECO:0000305" key="7">
    <source>
    </source>
</evidence>
<reference key="1">
    <citation type="journal article" date="2014" name="Plant J.">
        <title>Diterpene synthases of the biosynthetic system of medicinally active diterpenoids in Marrubium vulgare.</title>
        <authorList>
            <person name="Zerbe P."/>
            <person name="Chiang A."/>
            <person name="Dullat H."/>
            <person name="O'Neil-Johnson M."/>
            <person name="Starks C."/>
            <person name="Hamberger B."/>
            <person name="Bohlmann J."/>
        </authorList>
    </citation>
    <scope>NUCLEOTIDE SEQUENCE [MRNA]</scope>
    <scope>FUNCTION</scope>
    <scope>CATALYTIC ACTIVITY</scope>
    <scope>PATHWAY</scope>
    <scope>TISSUE SPECIFICITY</scope>
</reference>